<dbReference type="EMBL" id="X66467">
    <property type="protein sequence ID" value="CAA47077.1"/>
    <property type="molecule type" value="Genomic_DNA"/>
</dbReference>
<dbReference type="PIR" id="S37606">
    <property type="entry name" value="S37606"/>
</dbReference>
<dbReference type="SMR" id="P34732"/>
<dbReference type="EnsemblFungi" id="C1_13580W_A-T">
    <property type="protein sequence ID" value="C1_13580W_A-T-p1"/>
    <property type="gene ID" value="C1_13580W_A"/>
</dbReference>
<dbReference type="VEuPathDB" id="FungiDB:C1_13580W_A"/>
<dbReference type="VEuPathDB" id="FungiDB:CAWG_00094"/>
<dbReference type="GO" id="GO:0005795">
    <property type="term" value="C:Golgi stack"/>
    <property type="evidence" value="ECO:0007669"/>
    <property type="project" value="TreeGrafter"/>
</dbReference>
<dbReference type="GO" id="GO:0005524">
    <property type="term" value="F:ATP binding"/>
    <property type="evidence" value="ECO:0007669"/>
    <property type="project" value="UniProtKB-KW"/>
</dbReference>
<dbReference type="GO" id="GO:0016887">
    <property type="term" value="F:ATP hydrolysis activity"/>
    <property type="evidence" value="ECO:0007669"/>
    <property type="project" value="EnsemblFungi"/>
</dbReference>
<dbReference type="GO" id="GO:0070300">
    <property type="term" value="F:phosphatidic acid binding"/>
    <property type="evidence" value="ECO:0007669"/>
    <property type="project" value="EnsemblFungi"/>
</dbReference>
<dbReference type="GO" id="GO:0000149">
    <property type="term" value="F:SNARE binding"/>
    <property type="evidence" value="ECO:0007669"/>
    <property type="project" value="EnsemblFungi"/>
</dbReference>
<dbReference type="GO" id="GO:0000045">
    <property type="term" value="P:autophagosome assembly"/>
    <property type="evidence" value="ECO:0007669"/>
    <property type="project" value="EnsemblFungi"/>
</dbReference>
<dbReference type="GO" id="GO:0006888">
    <property type="term" value="P:endoplasmic reticulum to Golgi vesicle-mediated transport"/>
    <property type="evidence" value="ECO:0007669"/>
    <property type="project" value="EnsemblFungi"/>
</dbReference>
<dbReference type="GO" id="GO:0043001">
    <property type="term" value="P:Golgi to plasma membrane protein transport"/>
    <property type="evidence" value="ECO:0007669"/>
    <property type="project" value="EnsemblFungi"/>
</dbReference>
<dbReference type="GO" id="GO:0048219">
    <property type="term" value="P:inter-Golgi cisterna vesicle-mediated transport"/>
    <property type="evidence" value="ECO:0007669"/>
    <property type="project" value="EnsemblFungi"/>
</dbReference>
<dbReference type="GO" id="GO:0035494">
    <property type="term" value="P:SNARE complex disassembly"/>
    <property type="evidence" value="ECO:0007669"/>
    <property type="project" value="EnsemblFungi"/>
</dbReference>
<dbReference type="GO" id="GO:0042144">
    <property type="term" value="P:vacuole fusion, non-autophagic"/>
    <property type="evidence" value="ECO:0007669"/>
    <property type="project" value="EnsemblFungi"/>
</dbReference>
<dbReference type="GO" id="GO:0048280">
    <property type="term" value="P:vesicle fusion with Golgi apparatus"/>
    <property type="evidence" value="ECO:0007669"/>
    <property type="project" value="EnsemblFungi"/>
</dbReference>
<dbReference type="CDD" id="cd00009">
    <property type="entry name" value="AAA"/>
    <property type="match status" value="1"/>
</dbReference>
<dbReference type="FunFam" id="3.40.50.300:FF:000166">
    <property type="entry name" value="vesicle-fusing ATPase isoform X1"/>
    <property type="match status" value="1"/>
</dbReference>
<dbReference type="FunFam" id="2.40.40.20:FF:000012">
    <property type="entry name" value="Vesicle-fusing ATPase protein"/>
    <property type="match status" value="1"/>
</dbReference>
<dbReference type="FunFam" id="3.40.50.300:FF:000187">
    <property type="entry name" value="Vesicular-fusion ATPase SEC18"/>
    <property type="match status" value="1"/>
</dbReference>
<dbReference type="FunFam" id="1.10.8.60:FF:000127">
    <property type="entry name" value="Vesicular-fusion protein SEC18"/>
    <property type="match status" value="1"/>
</dbReference>
<dbReference type="Gene3D" id="1.10.8.60">
    <property type="match status" value="2"/>
</dbReference>
<dbReference type="Gene3D" id="2.40.40.20">
    <property type="match status" value="1"/>
</dbReference>
<dbReference type="Gene3D" id="3.10.330.10">
    <property type="match status" value="1"/>
</dbReference>
<dbReference type="Gene3D" id="3.40.50.300">
    <property type="entry name" value="P-loop containing nucleotide triphosphate hydrolases"/>
    <property type="match status" value="2"/>
</dbReference>
<dbReference type="InterPro" id="IPR003593">
    <property type="entry name" value="AAA+_ATPase"/>
</dbReference>
<dbReference type="InterPro" id="IPR041569">
    <property type="entry name" value="AAA_lid_3"/>
</dbReference>
<dbReference type="InterPro" id="IPR009010">
    <property type="entry name" value="Asp_de-COase-like_dom_sf"/>
</dbReference>
<dbReference type="InterPro" id="IPR003959">
    <property type="entry name" value="ATPase_AAA_core"/>
</dbReference>
<dbReference type="InterPro" id="IPR003960">
    <property type="entry name" value="ATPase_AAA_CS"/>
</dbReference>
<dbReference type="InterPro" id="IPR004201">
    <property type="entry name" value="Cdc48_dom2"/>
</dbReference>
<dbReference type="InterPro" id="IPR029067">
    <property type="entry name" value="CDC48_domain_2-like_sf"/>
</dbReference>
<dbReference type="InterPro" id="IPR003338">
    <property type="entry name" value="CDC4_N-term_subdom"/>
</dbReference>
<dbReference type="InterPro" id="IPR027417">
    <property type="entry name" value="P-loop_NTPase"/>
</dbReference>
<dbReference type="InterPro" id="IPR039812">
    <property type="entry name" value="Vesicle-fus_ATPase"/>
</dbReference>
<dbReference type="PANTHER" id="PTHR23078:SF3">
    <property type="entry name" value="VESICLE-FUSING ATPASE"/>
    <property type="match status" value="1"/>
</dbReference>
<dbReference type="PANTHER" id="PTHR23078">
    <property type="entry name" value="VESICULAR-FUSION PROTEIN NSF"/>
    <property type="match status" value="1"/>
</dbReference>
<dbReference type="Pfam" id="PF00004">
    <property type="entry name" value="AAA"/>
    <property type="match status" value="2"/>
</dbReference>
<dbReference type="Pfam" id="PF17862">
    <property type="entry name" value="AAA_lid_3"/>
    <property type="match status" value="1"/>
</dbReference>
<dbReference type="Pfam" id="PF02933">
    <property type="entry name" value="CDC48_2"/>
    <property type="match status" value="1"/>
</dbReference>
<dbReference type="Pfam" id="PF02359">
    <property type="entry name" value="CDC48_N"/>
    <property type="match status" value="1"/>
</dbReference>
<dbReference type="SMART" id="SM00382">
    <property type="entry name" value="AAA"/>
    <property type="match status" value="2"/>
</dbReference>
<dbReference type="SMART" id="SM01073">
    <property type="entry name" value="CDC48_N"/>
    <property type="match status" value="1"/>
</dbReference>
<dbReference type="SUPFAM" id="SSF50692">
    <property type="entry name" value="ADC-like"/>
    <property type="match status" value="1"/>
</dbReference>
<dbReference type="SUPFAM" id="SSF54585">
    <property type="entry name" value="Cdc48 domain 2-like"/>
    <property type="match status" value="1"/>
</dbReference>
<dbReference type="SUPFAM" id="SSF52540">
    <property type="entry name" value="P-loop containing nucleoside triphosphate hydrolases"/>
    <property type="match status" value="2"/>
</dbReference>
<dbReference type="PROSITE" id="PS00674">
    <property type="entry name" value="AAA"/>
    <property type="match status" value="1"/>
</dbReference>
<sequence>MEKLGFHKVSNSPSSPSQPKITHNRPIPHPQSPPLPQRPLSEPLKKQLLVDNSPGNDVVIANCVAVNAQDFQNIPDRAPVILDGVFVYSIAKDDRVRPGTIGLAGNMRTWGKWSLGQPVNVENYNIFHNGQQQQYLGAIDLSIDFRAKARANSNPINHDELVALFLKNYENQILQPTQVIYMEYTGIYFQIRVNNVQIIDVNTKDQLPSFKDSDDINTKGILIKSTDVGFYPYEGSIINLTKPKTLKQRMFGGSTPHRTSRRKQIINPDFKLEDLGIGGLDAEFQDIFRRAFNSRILPPELAEKLDYKHCKGLLLYGPPGTGKTLIARKLSKMLNGKEPKIVNGPEMLSKYVGASEENIRNLFKDAEAEYKLKGEDSDLHVIIFDELDSVFKQRGSGKSDGTGVGDNVVNQLLSKMDGVDQLNNILVIGMTNRLDLIDTALLRPGRFEIQIEISLPDEKGRKDIFLIHTKKLTENGILSSDVNFDELSTLTKNFTGAEIEGLCNSAKSYAISRHTKKGALAQIDPESIAKMKITRDDFLLALNDIRPAFGTDEEDLSQQAQHGIIQFNQTIRNIFEKGQSIIDVVRSSETEHLRSILLYGPPGVGKTSIATTLALNSDFPFIKMLSAETLVGMGELRKIQEIDNVFRDVHKSPLNVLVIDKIENIINYNPIGPRFSNDILQVLMVYLTKKPPKGRRLLIIGTTSQYQVFKHMNLIDSFNDAIAVPPIKHIEEVGKVLDKLGFMNKSEREEILSQLSRYDINIGIKSLIDVLMVSKYSRDTVDEVVNNIVEKMSG</sequence>
<organism>
    <name type="scientific">Candida albicans</name>
    <name type="common">Yeast</name>
    <dbReference type="NCBI Taxonomy" id="5476"/>
    <lineage>
        <taxon>Eukaryota</taxon>
        <taxon>Fungi</taxon>
        <taxon>Dikarya</taxon>
        <taxon>Ascomycota</taxon>
        <taxon>Saccharomycotina</taxon>
        <taxon>Pichiomycetes</taxon>
        <taxon>Debaryomycetaceae</taxon>
        <taxon>Candida/Lodderomyces clade</taxon>
        <taxon>Candida</taxon>
    </lineage>
</organism>
<feature type="chain" id="PRO_0000084569" description="Vesicular-fusion protein SEC18">
    <location>
        <begin position="1"/>
        <end position="794"/>
    </location>
</feature>
<feature type="region of interest" description="Disordered" evidence="2">
    <location>
        <begin position="1"/>
        <end position="40"/>
    </location>
</feature>
<feature type="compositionally biased region" description="Polar residues" evidence="2">
    <location>
        <begin position="9"/>
        <end position="21"/>
    </location>
</feature>
<feature type="compositionally biased region" description="Pro residues" evidence="2">
    <location>
        <begin position="27"/>
        <end position="37"/>
    </location>
</feature>
<feature type="binding site" evidence="1">
    <location>
        <begin position="317"/>
        <end position="324"/>
    </location>
    <ligand>
        <name>ATP</name>
        <dbReference type="ChEBI" id="CHEBI:30616"/>
    </ligand>
</feature>
<feature type="binding site" evidence="1">
    <location>
        <begin position="600"/>
        <end position="607"/>
    </location>
    <ligand>
        <name>ATP</name>
        <dbReference type="ChEBI" id="CHEBI:30616"/>
    </ligand>
</feature>
<comment type="function">
    <text>Required for vesicle-mediated transport. Catalyzes the fusion of transport vesicles within the Golgi cisternae. Is also required for transport from the endoplasmic reticulum to the Golgi stack. Seems to function as a fusion protein required for the delivery of cargo proteins to all compartments of the Golgi stack independent of vesicle origin.</text>
</comment>
<comment type="subcellular location">
    <subcellularLocation>
        <location>Cytoplasm</location>
    </subcellularLocation>
</comment>
<comment type="similarity">
    <text evidence="3">Belongs to the AAA ATPase family.</text>
</comment>
<keyword id="KW-0067">ATP-binding</keyword>
<keyword id="KW-0963">Cytoplasm</keyword>
<keyword id="KW-0931">ER-Golgi transport</keyword>
<keyword id="KW-0547">Nucleotide-binding</keyword>
<keyword id="KW-0653">Protein transport</keyword>
<keyword id="KW-0677">Repeat</keyword>
<keyword id="KW-0813">Transport</keyword>
<name>SEC18_CANAX</name>
<reference key="1">
    <citation type="journal article" date="1993" name="Yeast">
        <title>Cloning and characterization of the SEC18 gene from Candida albicans.</title>
        <authorList>
            <person name="Nieto A."/>
            <person name="Sanz P."/>
            <person name="Sentandreu R."/>
            <person name="del Castilo Agudo L."/>
        </authorList>
    </citation>
    <scope>NUCLEOTIDE SEQUENCE [GENOMIC DNA]</scope>
    <source>
        <strain>ATCC 26555</strain>
    </source>
</reference>
<protein>
    <recommendedName>
        <fullName>Vesicular-fusion protein SEC18</fullName>
    </recommendedName>
</protein>
<gene>
    <name type="primary">SEC18</name>
</gene>
<proteinExistence type="inferred from homology"/>
<accession>P34732</accession>
<evidence type="ECO:0000255" key="1"/>
<evidence type="ECO:0000256" key="2">
    <source>
        <dbReference type="SAM" id="MobiDB-lite"/>
    </source>
</evidence>
<evidence type="ECO:0000305" key="3"/>